<protein>
    <recommendedName>
        <fullName evidence="1">dCTP deaminase, dUMP-forming</fullName>
        <ecNumber evidence="1">3.5.4.30</ecNumber>
    </recommendedName>
    <alternativeName>
        <fullName evidence="1">Bifunctional dCTP deaminase:dUTPase</fullName>
    </alternativeName>
    <alternativeName>
        <fullName evidence="1">DCD-DUT</fullName>
    </alternativeName>
</protein>
<feature type="chain" id="PRO_1000123152" description="dCTP deaminase, dUMP-forming">
    <location>
        <begin position="1"/>
        <end position="190"/>
    </location>
</feature>
<feature type="region of interest" description="Disordered" evidence="2">
    <location>
        <begin position="160"/>
        <end position="190"/>
    </location>
</feature>
<feature type="compositionally biased region" description="Polar residues" evidence="2">
    <location>
        <begin position="171"/>
        <end position="190"/>
    </location>
</feature>
<feature type="active site" description="Proton donor/acceptor" evidence="1">
    <location>
        <position position="129"/>
    </location>
</feature>
<feature type="binding site" evidence="1">
    <location>
        <begin position="101"/>
        <end position="106"/>
    </location>
    <ligand>
        <name>dCTP</name>
        <dbReference type="ChEBI" id="CHEBI:61481"/>
    </ligand>
</feature>
<feature type="binding site" evidence="1">
    <location>
        <position position="119"/>
    </location>
    <ligand>
        <name>dCTP</name>
        <dbReference type="ChEBI" id="CHEBI:61481"/>
    </ligand>
</feature>
<feature type="binding site" evidence="1">
    <location>
        <begin position="127"/>
        <end position="129"/>
    </location>
    <ligand>
        <name>dCTP</name>
        <dbReference type="ChEBI" id="CHEBI:61481"/>
    </ligand>
</feature>
<feature type="binding site" evidence="1">
    <location>
        <position position="148"/>
    </location>
    <ligand>
        <name>dCTP</name>
        <dbReference type="ChEBI" id="CHEBI:61481"/>
    </ligand>
</feature>
<feature type="binding site" evidence="1">
    <location>
        <position position="162"/>
    </location>
    <ligand>
        <name>dCTP</name>
        <dbReference type="ChEBI" id="CHEBI:61481"/>
    </ligand>
</feature>
<feature type="binding site" evidence="1">
    <location>
        <position position="170"/>
    </location>
    <ligand>
        <name>dCTP</name>
        <dbReference type="ChEBI" id="CHEBI:61481"/>
    </ligand>
</feature>
<feature type="binding site" evidence="1">
    <location>
        <position position="174"/>
    </location>
    <ligand>
        <name>dCTP</name>
        <dbReference type="ChEBI" id="CHEBI:61481"/>
    </ligand>
</feature>
<feature type="site" description="Important for bifunctional activity" evidence="1">
    <location>
        <begin position="116"/>
        <end position="117"/>
    </location>
</feature>
<sequence>MLLSDRDLRAEISSGRLGIDPFDDTLVQPSSIDVRLDCLFRVFNNTRYTHIDPAKQQDELTSLVQPVDGEPFVLHPGEFVLGSTLELFTLPDNLAGRLEGKSSLGRLGLLTHSTAGFIDPGFSGHITLELSNVANLPITLWPGMKIGQLCMLRLTSPSEHPYGSSRAGSKYQGQRGPTPSRSCQNFIRST</sequence>
<dbReference type="EC" id="3.5.4.30" evidence="1"/>
<dbReference type="EMBL" id="AP010918">
    <property type="protein sequence ID" value="BAH24628.1"/>
    <property type="molecule type" value="Genomic_DNA"/>
</dbReference>
<dbReference type="RefSeq" id="WP_003401638.1">
    <property type="nucleotide sequence ID" value="NZ_CP014566.1"/>
</dbReference>
<dbReference type="SMR" id="C1AJZ9"/>
<dbReference type="KEGG" id="mbt:JTY_0331"/>
<dbReference type="HOGENOM" id="CLU_087476_2_0_11"/>
<dbReference type="UniPathway" id="UPA00610">
    <property type="reaction ID" value="UER00667"/>
</dbReference>
<dbReference type="GO" id="GO:0033973">
    <property type="term" value="F:dCTP deaminase (dUMP-forming) activity"/>
    <property type="evidence" value="ECO:0007669"/>
    <property type="project" value="UniProtKB-UniRule"/>
</dbReference>
<dbReference type="GO" id="GO:0008829">
    <property type="term" value="F:dCTP deaminase activity"/>
    <property type="evidence" value="ECO:0007669"/>
    <property type="project" value="InterPro"/>
</dbReference>
<dbReference type="GO" id="GO:0000166">
    <property type="term" value="F:nucleotide binding"/>
    <property type="evidence" value="ECO:0007669"/>
    <property type="project" value="UniProtKB-KW"/>
</dbReference>
<dbReference type="GO" id="GO:0006226">
    <property type="term" value="P:dUMP biosynthetic process"/>
    <property type="evidence" value="ECO:0007669"/>
    <property type="project" value="UniProtKB-UniRule"/>
</dbReference>
<dbReference type="GO" id="GO:0006229">
    <property type="term" value="P:dUTP biosynthetic process"/>
    <property type="evidence" value="ECO:0007669"/>
    <property type="project" value="InterPro"/>
</dbReference>
<dbReference type="GO" id="GO:0015949">
    <property type="term" value="P:nucleobase-containing small molecule interconversion"/>
    <property type="evidence" value="ECO:0007669"/>
    <property type="project" value="TreeGrafter"/>
</dbReference>
<dbReference type="CDD" id="cd07557">
    <property type="entry name" value="trimeric_dUTPase"/>
    <property type="match status" value="1"/>
</dbReference>
<dbReference type="FunFam" id="2.70.40.10:FF:000005">
    <property type="entry name" value="dCTP deaminase, dUMP-forming"/>
    <property type="match status" value="1"/>
</dbReference>
<dbReference type="Gene3D" id="2.70.40.10">
    <property type="match status" value="1"/>
</dbReference>
<dbReference type="HAMAP" id="MF_00146">
    <property type="entry name" value="dCTP_deaminase"/>
    <property type="match status" value="1"/>
</dbReference>
<dbReference type="InterPro" id="IPR011962">
    <property type="entry name" value="dCTP_deaminase"/>
</dbReference>
<dbReference type="InterPro" id="IPR036157">
    <property type="entry name" value="dUTPase-like_sf"/>
</dbReference>
<dbReference type="InterPro" id="IPR033704">
    <property type="entry name" value="dUTPase_trimeric"/>
</dbReference>
<dbReference type="NCBIfam" id="TIGR02274">
    <property type="entry name" value="dCTP_deam"/>
    <property type="match status" value="1"/>
</dbReference>
<dbReference type="PANTHER" id="PTHR42680">
    <property type="entry name" value="DCTP DEAMINASE"/>
    <property type="match status" value="1"/>
</dbReference>
<dbReference type="PANTHER" id="PTHR42680:SF3">
    <property type="entry name" value="DCTP DEAMINASE"/>
    <property type="match status" value="1"/>
</dbReference>
<dbReference type="Pfam" id="PF22769">
    <property type="entry name" value="DCD"/>
    <property type="match status" value="1"/>
</dbReference>
<dbReference type="SUPFAM" id="SSF51283">
    <property type="entry name" value="dUTPase-like"/>
    <property type="match status" value="1"/>
</dbReference>
<evidence type="ECO:0000255" key="1">
    <source>
        <dbReference type="HAMAP-Rule" id="MF_00146"/>
    </source>
</evidence>
<evidence type="ECO:0000256" key="2">
    <source>
        <dbReference type="SAM" id="MobiDB-lite"/>
    </source>
</evidence>
<proteinExistence type="inferred from homology"/>
<keyword id="KW-0378">Hydrolase</keyword>
<keyword id="KW-0546">Nucleotide metabolism</keyword>
<keyword id="KW-0547">Nucleotide-binding</keyword>
<accession>C1AJZ9</accession>
<organism>
    <name type="scientific">Mycobacterium bovis (strain BCG / Tokyo 172 / ATCC 35737 / TMC 1019)</name>
    <dbReference type="NCBI Taxonomy" id="561275"/>
    <lineage>
        <taxon>Bacteria</taxon>
        <taxon>Bacillati</taxon>
        <taxon>Actinomycetota</taxon>
        <taxon>Actinomycetes</taxon>
        <taxon>Mycobacteriales</taxon>
        <taxon>Mycobacteriaceae</taxon>
        <taxon>Mycobacterium</taxon>
        <taxon>Mycobacterium tuberculosis complex</taxon>
    </lineage>
</organism>
<gene>
    <name evidence="1" type="primary">dcd</name>
    <name type="ordered locus">JTY_0331</name>
</gene>
<comment type="function">
    <text evidence="1">Bifunctional enzyme that catalyzes both the deamination of dCTP to dUTP and the hydrolysis of dUTP to dUMP without releasing the toxic dUTP intermediate.</text>
</comment>
<comment type="catalytic activity">
    <reaction evidence="1">
        <text>dCTP + 2 H2O = dUMP + NH4(+) + diphosphate</text>
        <dbReference type="Rhea" id="RHEA:19205"/>
        <dbReference type="ChEBI" id="CHEBI:15377"/>
        <dbReference type="ChEBI" id="CHEBI:28938"/>
        <dbReference type="ChEBI" id="CHEBI:33019"/>
        <dbReference type="ChEBI" id="CHEBI:61481"/>
        <dbReference type="ChEBI" id="CHEBI:246422"/>
        <dbReference type="EC" id="3.5.4.30"/>
    </reaction>
</comment>
<comment type="pathway">
    <text evidence="1">Pyrimidine metabolism; dUMP biosynthesis; dUMP from dCTP: step 1/1.</text>
</comment>
<comment type="subunit">
    <text evidence="1">Homotrimer.</text>
</comment>
<comment type="similarity">
    <text evidence="1">Belongs to the dCTP deaminase family.</text>
</comment>
<reference key="1">
    <citation type="journal article" date="2009" name="Vaccine">
        <title>Whole genome sequence analysis of Mycobacterium bovis bacillus Calmette-Guerin (BCG) Tokyo 172: a comparative study of BCG vaccine substrains.</title>
        <authorList>
            <person name="Seki M."/>
            <person name="Honda I."/>
            <person name="Fujita I."/>
            <person name="Yano I."/>
            <person name="Yamamoto S."/>
            <person name="Koyama A."/>
        </authorList>
    </citation>
    <scope>NUCLEOTIDE SEQUENCE [LARGE SCALE GENOMIC DNA]</scope>
    <source>
        <strain>BCG / Tokyo 172 / ATCC 35737 / TMC 1019</strain>
    </source>
</reference>
<name>DCDB_MYCBT</name>